<organism>
    <name type="scientific">Escherichia phage Mu</name>
    <name type="common">Bacteriophage Mu</name>
    <dbReference type="NCBI Taxonomy" id="2681603"/>
    <lineage>
        <taxon>Viruses</taxon>
        <taxon>Duplodnaviria</taxon>
        <taxon>Heunggongvirae</taxon>
        <taxon>Uroviricota</taxon>
        <taxon>Caudoviricetes</taxon>
        <taxon>Muvirus</taxon>
        <taxon>Muvirus mu</taxon>
    </lineage>
</organism>
<evidence type="ECO:0000269" key="1">
    <source>
    </source>
</evidence>
<evidence type="ECO:0000269" key="2">
    <source>
    </source>
</evidence>
<evidence type="ECO:0000305" key="3"/>
<evidence type="ECO:0000305" key="4">
    <source>
    </source>
</evidence>
<keyword id="KW-1035">Host cytoplasm</keyword>
<keyword id="KW-0945">Host-virus interaction</keyword>
<keyword id="KW-0426">Late protein</keyword>
<keyword id="KW-1185">Reference proteome</keyword>
<keyword id="KW-1233">Viral attachment to host adhesion receptor</keyword>
<keyword id="KW-1161">Viral attachment to host cell</keyword>
<keyword id="KW-1264">Viral receptor tropism switching</keyword>
<keyword id="KW-1188">Viral release from host cell</keyword>
<keyword id="KW-1245">Viral tail assembly</keyword>
<keyword id="KW-1246">Viral tail fiber assembly</keyword>
<keyword id="KW-1230">Viral tail fiber protein</keyword>
<keyword id="KW-1227">Viral tail protein</keyword>
<keyword id="KW-0946">Virion</keyword>
<keyword id="KW-1160">Virus entry into host cell</keyword>
<proteinExistence type="evidence at transcript level"/>
<organismHost>
    <name type="scientific">Enterobacteriaceae</name>
    <dbReference type="NCBI Taxonomy" id="543"/>
</organismHost>
<comment type="function">
    <text evidence="3">Chaperone involved in tail fiber assembly. Remains associated to the tail fiber and participates in the host receptor binding. Binds to the primary receptor (Probable). Two alternate tail fiber assembly proteins U and U' are encoded extending the host range of the virus.</text>
</comment>
<comment type="subcellular location">
    <subcellularLocation>
        <location evidence="2">Virion</location>
    </subcellularLocation>
    <subcellularLocation>
        <location evidence="4">Host cytoplasm</location>
    </subcellularLocation>
    <text evidence="3">Tail fiber.</text>
</comment>
<comment type="induction">
    <text evidence="1">Expressed in the late phase of the viral replicative cycle. Expression of late genes is activated by the viral late transcription activator C. Expressed alternatively with tail fiber assembly protein U. The switch from S-U to S'-U' is performed through inversion of a DNA segment called G by the phage invertase protein Gin.</text>
</comment>
<comment type="miscellaneous">
    <text>The orientation of the G segment is defined as G+ and G-. G+ orientation provides S-U fibers whereas G- provides S'-U' fibers. S-U and S'-U' dont have the same host range (e.g. respectively E.coli and C.freundii).</text>
</comment>
<comment type="similarity">
    <text evidence="3">Belongs to the tfa family.</text>
</comment>
<dbReference type="EMBL" id="AF083977">
    <property type="status" value="NOT_ANNOTATED_CDS"/>
    <property type="molecule type" value="Genomic_DNA"/>
</dbReference>
<dbReference type="SMR" id="P0DJY5"/>
<dbReference type="Proteomes" id="UP000002611">
    <property type="component" value="Genome"/>
</dbReference>
<dbReference type="GO" id="GO:0030430">
    <property type="term" value="C:host cell cytoplasm"/>
    <property type="evidence" value="ECO:0007669"/>
    <property type="project" value="UniProtKB-SubCell"/>
</dbReference>
<dbReference type="GO" id="GO:0098024">
    <property type="term" value="C:virus tail, fiber"/>
    <property type="evidence" value="ECO:0007669"/>
    <property type="project" value="UniProtKB-KW"/>
</dbReference>
<dbReference type="GO" id="GO:0098671">
    <property type="term" value="P:adhesion receptor-mediated virion attachment to host cell"/>
    <property type="evidence" value="ECO:0007669"/>
    <property type="project" value="UniProtKB-KW"/>
</dbReference>
<dbReference type="GO" id="GO:0046718">
    <property type="term" value="P:symbiont entry into host cell"/>
    <property type="evidence" value="ECO:0007669"/>
    <property type="project" value="UniProtKB-KW"/>
</dbReference>
<dbReference type="GO" id="GO:0098678">
    <property type="term" value="P:viral tropism switching"/>
    <property type="evidence" value="ECO:0007669"/>
    <property type="project" value="UniProtKB-KW"/>
</dbReference>
<dbReference type="GO" id="GO:0098004">
    <property type="term" value="P:virus tail fiber assembly"/>
    <property type="evidence" value="ECO:0007669"/>
    <property type="project" value="UniProtKB-KW"/>
</dbReference>
<dbReference type="InterPro" id="IPR003458">
    <property type="entry name" value="Phage_T4_Gp38_tail_assem"/>
</dbReference>
<dbReference type="Pfam" id="PF02413">
    <property type="entry name" value="Caudo_TAP"/>
    <property type="match status" value="1"/>
</dbReference>
<gene>
    <name type="primary">U'</name>
    <name type="ordered locus">Mup51</name>
</gene>
<sequence length="177" mass="20698">MMHLKNITAGNPKTKEQYQLTKQFNIKWLYTEDGKNWYEEQKNFQPDTLKMVYDHNGVIICIEKDVSAINPEGANVVEVPDITANRRADISGKWMFKDGVVIKRTYTEEEQRQQAENEKQSLLQLVRDKTQLWDSQLRLGIISDENKQKLTEWMLYAQKVESTDTSSLPVTFPEQPE</sequence>
<reference key="1">
    <citation type="journal article" date="2002" name="J. Mol. Biol.">
        <title>Bacteriophage Mu genome sequence: analysis and comparison with Mu-like prophages in Haemophilus, Neisseria and Deinococcus.</title>
        <authorList>
            <person name="Morgan G.J."/>
            <person name="Hatfull G.F."/>
            <person name="Casjens S."/>
            <person name="Hendrix R.W."/>
        </authorList>
    </citation>
    <scope>NUCLEOTIDE SEQUENCE [LARGE SCALE GENOMIC DNA]</scope>
</reference>
<reference key="2">
    <citation type="journal article" date="1993" name="Genetics">
        <title>Mutational analysis of a C-dependent late promoter of bacteriophage Mu.</title>
        <authorList>
            <person name="Chiang L.W."/>
            <person name="Howe M.M."/>
        </authorList>
    </citation>
    <scope>INDUCTION</scope>
</reference>
<reference key="3">
    <citation type="journal article" date="1996" name="Virology">
        <title>Bacteriophage Mu head assembly.</title>
        <authorList>
            <person name="Grimaud R."/>
        </authorList>
    </citation>
    <scope>SUBCELLULAR LOCATION</scope>
</reference>
<name>U2_BPMU</name>
<accession>P0DJY5</accession>
<feature type="chain" id="PRO_0000429064" description="Tail fiber assembly protein U'">
    <location>
        <begin position="1"/>
        <end position="177"/>
    </location>
</feature>
<protein>
    <recommendedName>
        <fullName>Tail fiber assembly protein U'</fullName>
    </recommendedName>
    <alternativeName>
        <fullName>Gene product U'</fullName>
        <shortName>gpU'</shortName>
    </alternativeName>
</protein>